<reference key="1">
    <citation type="journal article" date="2008" name="J. Bacteriol.">
        <title>Complete genome sequence of Leuconostoc citreum KM20.</title>
        <authorList>
            <person name="Kim J.F."/>
            <person name="Jeong H."/>
            <person name="Lee J.-S."/>
            <person name="Choi S.-H."/>
            <person name="Ha M."/>
            <person name="Hur C.-G."/>
            <person name="Kim J.-S."/>
            <person name="Lee S."/>
            <person name="Park H.-S."/>
            <person name="Park Y.-H."/>
            <person name="Oh T.K."/>
        </authorList>
    </citation>
    <scope>NUCLEOTIDE SEQUENCE [LARGE SCALE GENOMIC DNA]</scope>
    <source>
        <strain>KM20</strain>
    </source>
</reference>
<comment type="function">
    <text evidence="1">Methylates ribosomal protein L11.</text>
</comment>
<comment type="catalytic activity">
    <reaction evidence="1">
        <text>L-lysyl-[protein] + 3 S-adenosyl-L-methionine = N(6),N(6),N(6)-trimethyl-L-lysyl-[protein] + 3 S-adenosyl-L-homocysteine + 3 H(+)</text>
        <dbReference type="Rhea" id="RHEA:54192"/>
        <dbReference type="Rhea" id="RHEA-COMP:9752"/>
        <dbReference type="Rhea" id="RHEA-COMP:13826"/>
        <dbReference type="ChEBI" id="CHEBI:15378"/>
        <dbReference type="ChEBI" id="CHEBI:29969"/>
        <dbReference type="ChEBI" id="CHEBI:57856"/>
        <dbReference type="ChEBI" id="CHEBI:59789"/>
        <dbReference type="ChEBI" id="CHEBI:61961"/>
    </reaction>
</comment>
<comment type="subcellular location">
    <subcellularLocation>
        <location evidence="1">Cytoplasm</location>
    </subcellularLocation>
</comment>
<comment type="similarity">
    <text evidence="1">Belongs to the methyltransferase superfamily. PrmA family.</text>
</comment>
<accession>B1MZ55</accession>
<gene>
    <name evidence="1" type="primary">prmA</name>
    <name type="ordered locus">LCK_00980</name>
</gene>
<protein>
    <recommendedName>
        <fullName evidence="1">Ribosomal protein L11 methyltransferase</fullName>
        <shortName evidence="1">L11 Mtase</shortName>
        <ecNumber evidence="1">2.1.1.-</ecNumber>
    </recommendedName>
</protein>
<name>PRMA_LEUCK</name>
<proteinExistence type="inferred from homology"/>
<keyword id="KW-0963">Cytoplasm</keyword>
<keyword id="KW-0489">Methyltransferase</keyword>
<keyword id="KW-1185">Reference proteome</keyword>
<keyword id="KW-0949">S-adenosyl-L-methionine</keyword>
<keyword id="KW-0808">Transferase</keyword>
<dbReference type="EC" id="2.1.1.-" evidence="1"/>
<dbReference type="EMBL" id="DQ489736">
    <property type="protein sequence ID" value="ACA82807.1"/>
    <property type="molecule type" value="Genomic_DNA"/>
</dbReference>
<dbReference type="RefSeq" id="WP_004909380.1">
    <property type="nucleotide sequence ID" value="NC_010471.1"/>
</dbReference>
<dbReference type="SMR" id="B1MZ55"/>
<dbReference type="STRING" id="349519.LCK_00980"/>
<dbReference type="KEGG" id="lci:LCK_00980"/>
<dbReference type="eggNOG" id="COG2264">
    <property type="taxonomic scope" value="Bacteria"/>
</dbReference>
<dbReference type="HOGENOM" id="CLU_049382_0_1_9"/>
<dbReference type="OrthoDB" id="9785995at2"/>
<dbReference type="Proteomes" id="UP000002166">
    <property type="component" value="Chromosome"/>
</dbReference>
<dbReference type="GO" id="GO:0005737">
    <property type="term" value="C:cytoplasm"/>
    <property type="evidence" value="ECO:0007669"/>
    <property type="project" value="UniProtKB-SubCell"/>
</dbReference>
<dbReference type="GO" id="GO:0016279">
    <property type="term" value="F:protein-lysine N-methyltransferase activity"/>
    <property type="evidence" value="ECO:0007669"/>
    <property type="project" value="RHEA"/>
</dbReference>
<dbReference type="GO" id="GO:0032259">
    <property type="term" value="P:methylation"/>
    <property type="evidence" value="ECO:0007669"/>
    <property type="project" value="UniProtKB-KW"/>
</dbReference>
<dbReference type="CDD" id="cd02440">
    <property type="entry name" value="AdoMet_MTases"/>
    <property type="match status" value="1"/>
</dbReference>
<dbReference type="Gene3D" id="3.40.50.150">
    <property type="entry name" value="Vaccinia Virus protein VP39"/>
    <property type="match status" value="1"/>
</dbReference>
<dbReference type="HAMAP" id="MF_00735">
    <property type="entry name" value="Methyltr_PrmA"/>
    <property type="match status" value="1"/>
</dbReference>
<dbReference type="InterPro" id="IPR050078">
    <property type="entry name" value="Ribosomal_L11_MeTrfase_PrmA"/>
</dbReference>
<dbReference type="InterPro" id="IPR004498">
    <property type="entry name" value="Ribosomal_PrmA_MeTrfase"/>
</dbReference>
<dbReference type="InterPro" id="IPR029063">
    <property type="entry name" value="SAM-dependent_MTases_sf"/>
</dbReference>
<dbReference type="NCBIfam" id="TIGR00406">
    <property type="entry name" value="prmA"/>
    <property type="match status" value="1"/>
</dbReference>
<dbReference type="PANTHER" id="PTHR43648">
    <property type="entry name" value="ELECTRON TRANSFER FLAVOPROTEIN BETA SUBUNIT LYSINE METHYLTRANSFERASE"/>
    <property type="match status" value="1"/>
</dbReference>
<dbReference type="PANTHER" id="PTHR43648:SF1">
    <property type="entry name" value="ELECTRON TRANSFER FLAVOPROTEIN BETA SUBUNIT LYSINE METHYLTRANSFERASE"/>
    <property type="match status" value="1"/>
</dbReference>
<dbReference type="Pfam" id="PF06325">
    <property type="entry name" value="PrmA"/>
    <property type="match status" value="1"/>
</dbReference>
<dbReference type="PIRSF" id="PIRSF000401">
    <property type="entry name" value="RPL11_MTase"/>
    <property type="match status" value="1"/>
</dbReference>
<dbReference type="SUPFAM" id="SSF53335">
    <property type="entry name" value="S-adenosyl-L-methionine-dependent methyltransferases"/>
    <property type="match status" value="1"/>
</dbReference>
<evidence type="ECO:0000255" key="1">
    <source>
        <dbReference type="HAMAP-Rule" id="MF_00735"/>
    </source>
</evidence>
<feature type="chain" id="PRO_1000192642" description="Ribosomal protein L11 methyltransferase">
    <location>
        <begin position="1"/>
        <end position="292"/>
    </location>
</feature>
<feature type="binding site" evidence="1">
    <location>
        <position position="138"/>
    </location>
    <ligand>
        <name>S-adenosyl-L-methionine</name>
        <dbReference type="ChEBI" id="CHEBI:59789"/>
    </ligand>
</feature>
<feature type="binding site" evidence="1">
    <location>
        <position position="159"/>
    </location>
    <ligand>
        <name>S-adenosyl-L-methionine</name>
        <dbReference type="ChEBI" id="CHEBI:59789"/>
    </ligand>
</feature>
<feature type="binding site" evidence="1">
    <location>
        <position position="181"/>
    </location>
    <ligand>
        <name>S-adenosyl-L-methionine</name>
        <dbReference type="ChEBI" id="CHEBI:59789"/>
    </ligand>
</feature>
<feature type="binding site" evidence="1">
    <location>
        <position position="225"/>
    </location>
    <ligand>
        <name>S-adenosyl-L-methionine</name>
        <dbReference type="ChEBI" id="CHEBI:59789"/>
    </ligand>
</feature>
<organism>
    <name type="scientific">Leuconostoc citreum (strain KM20)</name>
    <dbReference type="NCBI Taxonomy" id="349519"/>
    <lineage>
        <taxon>Bacteria</taxon>
        <taxon>Bacillati</taxon>
        <taxon>Bacillota</taxon>
        <taxon>Bacilli</taxon>
        <taxon>Lactobacillales</taxon>
        <taxon>Lactobacillaceae</taxon>
        <taxon>Leuconostoc</taxon>
    </lineage>
</organism>
<sequence length="292" mass="31910">MNWQAVSVATKNEAIETVADILLQVGAQGVQINDHDAISVTAYYPDDEQLGETITAIQKALKHLSDIGMSVAPATITVNGIQQKDWEDNWKAYYHAERVTRHFTVVPSWETYHPNQIDELPIIMDPKLAFGTGTHETTRLMIQALENVVRGGESMIDVGTGSGVLAVAAKQLGVAHVLATDIDEMSVNVAKENLRLNPVAQDVTVVASDLLADVVISPVDLIVANILADVIERLIPQTTTLLKPGGLFLVSGIYDNIALHIEDVLRANDYTIVQKSQMGEWHGYIAQLKEKN</sequence>